<evidence type="ECO:0000250" key="1">
    <source>
        <dbReference type="UniProtKB" id="Q9BSM1"/>
    </source>
</evidence>
<evidence type="ECO:0000255" key="2">
    <source>
        <dbReference type="PROSITE-ProRule" id="PRU00175"/>
    </source>
</evidence>
<organism>
    <name type="scientific">Xenopus tropicalis</name>
    <name type="common">Western clawed frog</name>
    <name type="synonym">Silurana tropicalis</name>
    <dbReference type="NCBI Taxonomy" id="8364"/>
    <lineage>
        <taxon>Eukaryota</taxon>
        <taxon>Metazoa</taxon>
        <taxon>Chordata</taxon>
        <taxon>Craniata</taxon>
        <taxon>Vertebrata</taxon>
        <taxon>Euteleostomi</taxon>
        <taxon>Amphibia</taxon>
        <taxon>Batrachia</taxon>
        <taxon>Anura</taxon>
        <taxon>Pipoidea</taxon>
        <taxon>Pipidae</taxon>
        <taxon>Xenopodinae</taxon>
        <taxon>Xenopus</taxon>
        <taxon>Silurana</taxon>
    </lineage>
</organism>
<sequence>MASQGPLVIAMRLRNQLQSVYKMDPLRNEEVVKVKIKELNEHIVCYLCAGYFIDATTITECLHTFCKSCIVKYLQTSKYCPLCNIKIHETQPLLNLKLDRVMQDIVYKLVPGLQENEDGRIRDFYHSRGLERVLQPSAVEDSVGDVSQLSLSLAVSQKTSHYYRNDEHVCLCLEKVSSGKDKKKFILEQKYVRCSVRSEIRHLRRVLSHRLSAPLAHVQLLIDNKVLPDHMTMKQLWLTHWYGKPAPLVLLYSVREKRR</sequence>
<reference key="1">
    <citation type="submission" date="2006-10" db="EMBL/GenBank/DDBJ databases">
        <authorList>
            <consortium name="Sanger Xenopus tropicalis EST/cDNA project"/>
        </authorList>
    </citation>
    <scope>NUCLEOTIDE SEQUENCE [LARGE SCALE MRNA]</scope>
    <source>
        <tissue>Egg</tissue>
    </source>
</reference>
<name>PCGF1_XENTR</name>
<feature type="chain" id="PRO_0000277860" description="Polycomb group RING finger protein 1">
    <location>
        <begin position="1"/>
        <end position="259"/>
    </location>
</feature>
<feature type="zinc finger region" description="RING-type" evidence="2">
    <location>
        <begin position="45"/>
        <end position="84"/>
    </location>
</feature>
<gene>
    <name type="primary">pcgf1</name>
    <name type="ORF">TEgg135k09.1</name>
</gene>
<keyword id="KW-0479">Metal-binding</keyword>
<keyword id="KW-0539">Nucleus</keyword>
<keyword id="KW-1185">Reference proteome</keyword>
<keyword id="KW-0678">Repressor</keyword>
<keyword id="KW-0804">Transcription</keyword>
<keyword id="KW-0805">Transcription regulation</keyword>
<keyword id="KW-0862">Zinc</keyword>
<keyword id="KW-0863">Zinc-finger</keyword>
<protein>
    <recommendedName>
        <fullName>Polycomb group RING finger protein 1</fullName>
    </recommendedName>
</protein>
<comment type="function">
    <text evidence="1">Component of a Polycomb group (PcG) multiprotein PRC1-like complex, a complex class required to maintain the transcriptionally repressive state of many genes, including Hox genes, throughout development. PcG PRC1 complex acts via chromatin remodeling and modification of histones; it mediates monoubiquitination of histone H2A 'Lys-119', rendering chromatin heritably changed in its expressibility.</text>
</comment>
<comment type="subunit">
    <text evidence="1">Component of a PRC1-like complex.</text>
</comment>
<comment type="subcellular location">
    <subcellularLocation>
        <location evidence="1">Nucleus</location>
    </subcellularLocation>
</comment>
<proteinExistence type="evidence at transcript level"/>
<accession>Q28H21</accession>
<dbReference type="EMBL" id="CR761098">
    <property type="protein sequence ID" value="CAJ81866.1"/>
    <property type="molecule type" value="mRNA"/>
</dbReference>
<dbReference type="RefSeq" id="NP_001016417.2">
    <property type="nucleotide sequence ID" value="NM_001016417.2"/>
</dbReference>
<dbReference type="SMR" id="Q28H21"/>
<dbReference type="FunCoup" id="Q28H21">
    <property type="interactions" value="1865"/>
</dbReference>
<dbReference type="GeneID" id="549171"/>
<dbReference type="KEGG" id="xtr:549171"/>
<dbReference type="CTD" id="84759"/>
<dbReference type="Xenbase" id="XB-GENE-6454077">
    <property type="gene designation" value="pcgf1"/>
</dbReference>
<dbReference type="InParanoid" id="Q28H21"/>
<dbReference type="OMA" id="AFKMASP"/>
<dbReference type="OrthoDB" id="1305878at2759"/>
<dbReference type="Proteomes" id="UP000008143">
    <property type="component" value="Chromosome 8"/>
</dbReference>
<dbReference type="GO" id="GO:0031519">
    <property type="term" value="C:PcG protein complex"/>
    <property type="evidence" value="ECO:0000250"/>
    <property type="project" value="UniProtKB"/>
</dbReference>
<dbReference type="GO" id="GO:0008270">
    <property type="term" value="F:zinc ion binding"/>
    <property type="evidence" value="ECO:0007669"/>
    <property type="project" value="UniProtKB-KW"/>
</dbReference>
<dbReference type="GO" id="GO:0006338">
    <property type="term" value="P:chromatin remodeling"/>
    <property type="evidence" value="ECO:0000250"/>
    <property type="project" value="UniProtKB"/>
</dbReference>
<dbReference type="CDD" id="cd17081">
    <property type="entry name" value="RAWUL_PCGF1"/>
    <property type="match status" value="1"/>
</dbReference>
<dbReference type="CDD" id="cd16733">
    <property type="entry name" value="RING-HC_PCGF1"/>
    <property type="match status" value="1"/>
</dbReference>
<dbReference type="FunFam" id="3.10.20.90:FF:000099">
    <property type="entry name" value="Polycomb group RING finger protein 1"/>
    <property type="match status" value="1"/>
</dbReference>
<dbReference type="FunFam" id="3.30.40.10:FF:000122">
    <property type="entry name" value="polycomb group RING finger protein 1"/>
    <property type="match status" value="1"/>
</dbReference>
<dbReference type="Gene3D" id="3.10.20.90">
    <property type="entry name" value="Phosphatidylinositol 3-kinase Catalytic Subunit, Chain A, domain 1"/>
    <property type="match status" value="1"/>
</dbReference>
<dbReference type="Gene3D" id="3.30.40.10">
    <property type="entry name" value="Zinc/RING finger domain, C3HC4 (zinc finger)"/>
    <property type="match status" value="1"/>
</dbReference>
<dbReference type="InterPro" id="IPR032443">
    <property type="entry name" value="RAWUL"/>
</dbReference>
<dbReference type="InterPro" id="IPR001841">
    <property type="entry name" value="Znf_RING"/>
</dbReference>
<dbReference type="InterPro" id="IPR013083">
    <property type="entry name" value="Znf_RING/FYVE/PHD"/>
</dbReference>
<dbReference type="InterPro" id="IPR017907">
    <property type="entry name" value="Znf_RING_CS"/>
</dbReference>
<dbReference type="PANTHER" id="PTHR10825:SF29">
    <property type="entry name" value="POLYCOMB GROUP RING FINGER PROTEIN 1"/>
    <property type="match status" value="1"/>
</dbReference>
<dbReference type="PANTHER" id="PTHR10825">
    <property type="entry name" value="RING FINGER DOMAIN-CONTAINING, POLYCOMB GROUP COMPONENT"/>
    <property type="match status" value="1"/>
</dbReference>
<dbReference type="Pfam" id="PF16207">
    <property type="entry name" value="RAWUL"/>
    <property type="match status" value="1"/>
</dbReference>
<dbReference type="Pfam" id="PF13923">
    <property type="entry name" value="zf-C3HC4_2"/>
    <property type="match status" value="1"/>
</dbReference>
<dbReference type="SMART" id="SM00184">
    <property type="entry name" value="RING"/>
    <property type="match status" value="1"/>
</dbReference>
<dbReference type="SUPFAM" id="SSF57850">
    <property type="entry name" value="RING/U-box"/>
    <property type="match status" value="1"/>
</dbReference>
<dbReference type="PROSITE" id="PS00518">
    <property type="entry name" value="ZF_RING_1"/>
    <property type="match status" value="1"/>
</dbReference>
<dbReference type="PROSITE" id="PS50089">
    <property type="entry name" value="ZF_RING_2"/>
    <property type="match status" value="1"/>
</dbReference>